<proteinExistence type="evidence at protein level"/>
<dbReference type="EC" id="2.7.7.7"/>
<dbReference type="EMBL" id="CP001340">
    <property type="protein sequence ID" value="ACL95468.1"/>
    <property type="molecule type" value="Genomic_DNA"/>
</dbReference>
<dbReference type="RefSeq" id="WP_010919792.1">
    <property type="nucleotide sequence ID" value="NC_011916.1"/>
</dbReference>
<dbReference type="RefSeq" id="YP_002517376.1">
    <property type="nucleotide sequence ID" value="NC_011916.1"/>
</dbReference>
<dbReference type="SMR" id="B8GWS6"/>
<dbReference type="GeneID" id="7333331"/>
<dbReference type="KEGG" id="ccs:CCNA_02003"/>
<dbReference type="PATRIC" id="fig|565050.3.peg.1962"/>
<dbReference type="HOGENOM" id="CLU_001600_0_0_5"/>
<dbReference type="OrthoDB" id="9803237at2"/>
<dbReference type="PhylomeDB" id="B8GWS6"/>
<dbReference type="Proteomes" id="UP000001364">
    <property type="component" value="Chromosome"/>
</dbReference>
<dbReference type="GO" id="GO:0005737">
    <property type="term" value="C:cytoplasm"/>
    <property type="evidence" value="ECO:0007669"/>
    <property type="project" value="UniProtKB-SubCell"/>
</dbReference>
<dbReference type="GO" id="GO:0008408">
    <property type="term" value="F:3'-5' exonuclease activity"/>
    <property type="evidence" value="ECO:0007669"/>
    <property type="project" value="InterPro"/>
</dbReference>
<dbReference type="GO" id="GO:0003887">
    <property type="term" value="F:DNA-directed DNA polymerase activity"/>
    <property type="evidence" value="ECO:0007669"/>
    <property type="project" value="UniProtKB-KW"/>
</dbReference>
<dbReference type="GO" id="GO:0003676">
    <property type="term" value="F:nucleic acid binding"/>
    <property type="evidence" value="ECO:0007669"/>
    <property type="project" value="InterPro"/>
</dbReference>
<dbReference type="GO" id="GO:0006260">
    <property type="term" value="P:DNA replication"/>
    <property type="evidence" value="ECO:0007669"/>
    <property type="project" value="UniProtKB-KW"/>
</dbReference>
<dbReference type="CDD" id="cd04485">
    <property type="entry name" value="DnaE_OBF"/>
    <property type="match status" value="1"/>
</dbReference>
<dbReference type="CDD" id="cd07433">
    <property type="entry name" value="PHP_PolIIIA_DnaE1"/>
    <property type="match status" value="1"/>
</dbReference>
<dbReference type="FunFam" id="3.20.20.140:FF:000207">
    <property type="entry name" value="DNA polymerase III subunit alpha"/>
    <property type="match status" value="1"/>
</dbReference>
<dbReference type="Gene3D" id="1.10.150.870">
    <property type="match status" value="1"/>
</dbReference>
<dbReference type="Gene3D" id="1.10.10.1600">
    <property type="entry name" value="Bacterial DNA polymerase III alpha subunit, thumb domain"/>
    <property type="match status" value="1"/>
</dbReference>
<dbReference type="Gene3D" id="3.20.20.140">
    <property type="entry name" value="Metal-dependent hydrolases"/>
    <property type="match status" value="1"/>
</dbReference>
<dbReference type="InterPro" id="IPR011708">
    <property type="entry name" value="DNA_pol3_alpha_NTPase_dom"/>
</dbReference>
<dbReference type="InterPro" id="IPR041931">
    <property type="entry name" value="DNA_pol3_alpha_thumb_dom"/>
</dbReference>
<dbReference type="InterPro" id="IPR040982">
    <property type="entry name" value="DNA_pol3_finger"/>
</dbReference>
<dbReference type="InterPro" id="IPR004805">
    <property type="entry name" value="DnaE2/DnaE/PolC"/>
</dbReference>
<dbReference type="InterPro" id="IPR029460">
    <property type="entry name" value="DNAPol_HHH"/>
</dbReference>
<dbReference type="InterPro" id="IPR004365">
    <property type="entry name" value="NA-bd_OB_tRNA"/>
</dbReference>
<dbReference type="InterPro" id="IPR004013">
    <property type="entry name" value="PHP_dom"/>
</dbReference>
<dbReference type="InterPro" id="IPR003141">
    <property type="entry name" value="Pol/His_phosphatase_N"/>
</dbReference>
<dbReference type="InterPro" id="IPR016195">
    <property type="entry name" value="Pol/histidinol_Pase-like"/>
</dbReference>
<dbReference type="InterPro" id="IPR049821">
    <property type="entry name" value="PolIIIA_DnaE1_PHP"/>
</dbReference>
<dbReference type="NCBIfam" id="TIGR00594">
    <property type="entry name" value="polc"/>
    <property type="match status" value="1"/>
</dbReference>
<dbReference type="NCBIfam" id="NF004226">
    <property type="entry name" value="PRK05673.1"/>
    <property type="match status" value="1"/>
</dbReference>
<dbReference type="PANTHER" id="PTHR32294">
    <property type="entry name" value="DNA POLYMERASE III SUBUNIT ALPHA"/>
    <property type="match status" value="1"/>
</dbReference>
<dbReference type="PANTHER" id="PTHR32294:SF0">
    <property type="entry name" value="DNA POLYMERASE III SUBUNIT ALPHA"/>
    <property type="match status" value="1"/>
</dbReference>
<dbReference type="Pfam" id="PF07733">
    <property type="entry name" value="DNA_pol3_alpha"/>
    <property type="match status" value="1"/>
</dbReference>
<dbReference type="Pfam" id="PF17657">
    <property type="entry name" value="DNA_pol3_finger"/>
    <property type="match status" value="1"/>
</dbReference>
<dbReference type="Pfam" id="PF14579">
    <property type="entry name" value="HHH_6"/>
    <property type="match status" value="1"/>
</dbReference>
<dbReference type="Pfam" id="PF02811">
    <property type="entry name" value="PHP"/>
    <property type="match status" value="1"/>
</dbReference>
<dbReference type="Pfam" id="PF01336">
    <property type="entry name" value="tRNA_anti-codon"/>
    <property type="match status" value="1"/>
</dbReference>
<dbReference type="SMART" id="SM00481">
    <property type="entry name" value="POLIIIAc"/>
    <property type="match status" value="1"/>
</dbReference>
<dbReference type="SUPFAM" id="SSF89550">
    <property type="entry name" value="PHP domain-like"/>
    <property type="match status" value="1"/>
</dbReference>
<feature type="chain" id="PRO_0000378286" description="DNA polymerase III subunit alpha">
    <location>
        <begin position="1"/>
        <end position="1143"/>
    </location>
</feature>
<feature type="mutagenesis site" description="Temperature-sensitive. Blocks the initiation stage of DNA replication and still allows DNA elongation to occur, but at a reduced rate, with the mutated protein being only partially active at 37 degrees Celsius." evidence="2">
    <original>V</original>
    <variation>E</variation>
    <location>
        <position position="569"/>
    </location>
</feature>
<keyword id="KW-0963">Cytoplasm</keyword>
<keyword id="KW-0235">DNA replication</keyword>
<keyword id="KW-0239">DNA-directed DNA polymerase</keyword>
<keyword id="KW-0548">Nucleotidyltransferase</keyword>
<keyword id="KW-1185">Reference proteome</keyword>
<keyword id="KW-0808">Transferase</keyword>
<organism>
    <name type="scientific">Caulobacter vibrioides (strain NA1000 / CB15N)</name>
    <name type="common">Caulobacter crescentus</name>
    <dbReference type="NCBI Taxonomy" id="565050"/>
    <lineage>
        <taxon>Bacteria</taxon>
        <taxon>Pseudomonadati</taxon>
        <taxon>Pseudomonadota</taxon>
        <taxon>Alphaproteobacteria</taxon>
        <taxon>Caulobacterales</taxon>
        <taxon>Caulobacteraceae</taxon>
        <taxon>Caulobacter</taxon>
    </lineage>
</organism>
<name>DPO3A_CAUVN</name>
<comment type="function">
    <text evidence="2">DNA polymerase III is a complex, multichain enzyme responsible for most of the replicative synthesis in bacteria. This DNA polymerase also exhibits 3' to 5' exonuclease activity. The alpha chain is the DNA polymerase.</text>
</comment>
<comment type="catalytic activity">
    <reaction>
        <text>DNA(n) + a 2'-deoxyribonucleoside 5'-triphosphate = DNA(n+1) + diphosphate</text>
        <dbReference type="Rhea" id="RHEA:22508"/>
        <dbReference type="Rhea" id="RHEA-COMP:17339"/>
        <dbReference type="Rhea" id="RHEA-COMP:17340"/>
        <dbReference type="ChEBI" id="CHEBI:33019"/>
        <dbReference type="ChEBI" id="CHEBI:61560"/>
        <dbReference type="ChEBI" id="CHEBI:173112"/>
        <dbReference type="EC" id="2.7.7.7"/>
    </reaction>
</comment>
<comment type="subunit">
    <text evidence="1">DNA polymerase III contains a core (composed of alpha, epsilon and theta chains) that associates with a tau subunit. This core dimerizes to form the PolIII' complex. PolIII' associates with the gamma complex (composed of gamma, delta, delta', psi and chi chains) and with the beta chain to form the complete DNA polymerase III complex (By similarity).</text>
</comment>
<comment type="subcellular location">
    <subcellularLocation>
        <location evidence="1">Cytoplasm</location>
    </subcellularLocation>
</comment>
<comment type="similarity">
    <text evidence="3">Belongs to the DNA polymerase type-C family. DnaE subfamily.</text>
</comment>
<sequence>MSDAEGQGFVHLRVRSAYSLLEGAIKADQIGKLAAEAKMPAAGLADRANLFGALEYSSYAKDAGVQPIIGCAIPVVGIGGGPTERWARAPTLMLLAQNERGYLNLSELSSIAYLDSAELPEPVVPWAKVAEHSEGLILLSGGTDGPVDALFAAGKTAEASAALAEMHRVFGDRFYVELQRHGLPRQAAAEPGLVNWAYDHDVPLVATNDVYFAKPGFYDAHDALLCISDGAFVGQDERRRVTPEHWFKPAEEMRKLFADLPEACDNTLDIARRCAFMVHKRDPILPSFPTGDGRNEAEELEHQAREGLKMRLEGLTLSAPEEEYWKRLDFELGIIKKMGFPGYFLIVSDFIKWGKAHGIPVGPGRGSGAGSLVAWVLTITDLDPLRFGLLFERFLNPERVSMPDFDVDFCQERREEVISYVQEKYGRDRVAQIITFGSLQARAVLRDVGRVMQLPLGLVDRLCKMVPNNPAAPVTLAQAIDLEPRLKQAKKEDANVSACLDVALQLEGLFRNASTHAAGLVIGDRPLTQLTPLYKDPRSDLPATQFNMKWVESAGLVKFDFLGLKTLTVLDRAVKHLKKRGFEIDLGKLPFDDAKTYELLASGQTVGVFQLESQGMRDTLRKMRCGSIEEITALISLYRPGPMDNIDTFVDCKFGRKPVDTLHPSLEAVLKETYGVIVYQEQVMQIAQILAGYSLGEADLLRRAMGKKKKEEMDLQKIRFVSGAKEKNVPEEQSGSIFELVAKFAGYGFNKSHAAAYAFISYQTAWLKANTPVEFFAASMSLDLSNTDKLAVFHQDARRFGITVRAPDVNRSGADFEVENGEVLYALGAIRNVGLEAMKHLVAVRAEGGPFRDVFDFVERIDPRQVNKRAIENLARAGAFDSIHKNRAQIVASADVLIAHAQSCHADRQGGQGGLFGSDPGAGRPRLSKTENWNQVDLLDEELSAVGFYLTGHPLEDMVGMLRRRRTVMLAEAMAQAEAGAEAFRMCGVVRRRQERASQSGEKFAFVSLSDPTGEYEVLYPPESLRKCRDVLEPGKAVAIKVRAKARDGEVRFFGDDAEPIEKAVENVVAGLRVHLSPSAAEIDALKRRLEPAQAQKGGEVTFVAAIGGGREIELRLPGRYTLDAALRGALKTAPGVALLEDV</sequence>
<protein>
    <recommendedName>
        <fullName>DNA polymerase III subunit alpha</fullName>
        <ecNumber>2.7.7.7</ecNumber>
    </recommendedName>
</protein>
<accession>B8GWS6</accession>
<reference key="1">
    <citation type="journal article" date="2010" name="J. Bacteriol.">
        <title>The genetic basis of laboratory adaptation in Caulobacter crescentus.</title>
        <authorList>
            <person name="Marks M.E."/>
            <person name="Castro-Rojas C.M."/>
            <person name="Teiling C."/>
            <person name="Du L."/>
            <person name="Kapatral V."/>
            <person name="Walunas T.L."/>
            <person name="Crosson S."/>
        </authorList>
    </citation>
    <scope>NUCLEOTIDE SEQUENCE [LARGE SCALE GENOMIC DNA]</scope>
    <source>
        <strain>NA1000 / CB15N</strain>
    </source>
</reference>
<reference key="2">
    <citation type="journal article" date="2004" name="J. Bacteriol.">
        <title>A temperature-sensitive mutation in the dnaE gene of Caulobacter crescentus that prevents initiation of DNA replication but not ongoing elongation of DNA.</title>
        <authorList>
            <person name="Lo T."/>
            <person name="van Der Schalie E."/>
            <person name="Werner T."/>
            <person name="Brun Y.V."/>
            <person name="Din N."/>
        </authorList>
    </citation>
    <scope>FUNCTION</scope>
    <scope>MUTAGENESIS OF VAL-569</scope>
</reference>
<gene>
    <name type="primary">dnaE1</name>
    <name type="synonym">dnaE</name>
    <name type="ordered locus">CCNA_02003</name>
</gene>
<evidence type="ECO:0000250" key="1"/>
<evidence type="ECO:0000269" key="2">
    <source>
    </source>
</evidence>
<evidence type="ECO:0000305" key="3"/>